<comment type="function">
    <text evidence="1">Catalyzes the initial step of the lipid cycle reactions in the biosynthesis of the cell wall peptidoglycan: transfers peptidoglycan precursor phospho-MurNAc-pentapeptide from UDP-MurNAc-pentapeptide onto the lipid carrier undecaprenyl phosphate, yielding undecaprenyl-pyrophosphoryl-MurNAc-pentapeptide, known as lipid I.</text>
</comment>
<comment type="catalytic activity">
    <reaction evidence="1">
        <text>UDP-N-acetyl-alpha-D-muramoyl-L-alanyl-gamma-D-glutamyl-meso-2,6-diaminopimeloyl-D-alanyl-D-alanine + di-trans,octa-cis-undecaprenyl phosphate = di-trans,octa-cis-undecaprenyl diphospho-N-acetyl-alpha-D-muramoyl-L-alanyl-D-glutamyl-meso-2,6-diaminopimeloyl-D-alanyl-D-alanine + UMP</text>
        <dbReference type="Rhea" id="RHEA:28386"/>
        <dbReference type="ChEBI" id="CHEBI:57865"/>
        <dbReference type="ChEBI" id="CHEBI:60392"/>
        <dbReference type="ChEBI" id="CHEBI:61386"/>
        <dbReference type="ChEBI" id="CHEBI:61387"/>
        <dbReference type="EC" id="2.7.8.13"/>
    </reaction>
</comment>
<comment type="cofactor">
    <cofactor evidence="1">
        <name>Mg(2+)</name>
        <dbReference type="ChEBI" id="CHEBI:18420"/>
    </cofactor>
</comment>
<comment type="pathway">
    <text evidence="1">Cell wall biogenesis; peptidoglycan biosynthesis.</text>
</comment>
<comment type="subcellular location">
    <subcellularLocation>
        <location evidence="1">Cell inner membrane</location>
        <topology evidence="1">Multi-pass membrane protein</topology>
    </subcellularLocation>
</comment>
<comment type="similarity">
    <text evidence="1">Belongs to the glycosyltransferase 4 family. MraY subfamily.</text>
</comment>
<feature type="chain" id="PRO_0000235443" description="Phospho-N-acetylmuramoyl-pentapeptide-transferase">
    <location>
        <begin position="1"/>
        <end position="389"/>
    </location>
</feature>
<feature type="transmembrane region" description="Helical" evidence="1">
    <location>
        <begin position="25"/>
        <end position="45"/>
    </location>
</feature>
<feature type="transmembrane region" description="Helical" evidence="1">
    <location>
        <begin position="73"/>
        <end position="93"/>
    </location>
</feature>
<feature type="transmembrane region" description="Helical" evidence="1">
    <location>
        <begin position="97"/>
        <end position="117"/>
    </location>
</feature>
<feature type="transmembrane region" description="Helical" evidence="1">
    <location>
        <begin position="135"/>
        <end position="155"/>
    </location>
</feature>
<feature type="transmembrane region" description="Helical" evidence="1">
    <location>
        <begin position="190"/>
        <end position="210"/>
    </location>
</feature>
<feature type="transmembrane region" description="Helical" evidence="1">
    <location>
        <begin position="222"/>
        <end position="242"/>
    </location>
</feature>
<feature type="transmembrane region" description="Helical" evidence="1">
    <location>
        <begin position="258"/>
        <end position="278"/>
    </location>
</feature>
<feature type="transmembrane region" description="Helical" evidence="1">
    <location>
        <begin position="286"/>
        <end position="306"/>
    </location>
</feature>
<feature type="transmembrane region" description="Helical" evidence="1">
    <location>
        <begin position="311"/>
        <end position="331"/>
    </location>
</feature>
<feature type="transmembrane region" description="Helical" evidence="1">
    <location>
        <begin position="366"/>
        <end position="386"/>
    </location>
</feature>
<sequence length="389" mass="42882">MLLALAQWLQGDASFLRLFTYLTFRAVMATITALVIGLVCGPWVIRKLTQMKVGQAVRKDGPQTHLVKSGTPTMGGVLILIGIAVATLLWGDLTNRFIWIVMLVTFGFGVIGWVDDYRKVVYKDPRGMSSREKYFWQSVIGLFAAVYLAFSVSEANNVRVFDLFMAWVRSGLSMGLPARADLMLPFLKSISYPLGVWGFIALTYFVIVGASNAVNLTDGLDGLVIMPVVLVGASLGVFAYVMGSAVYSKYLLFPHIPGAGELLIFCSAMGGAGLAFLWYNTHPAQVFMGDVGALALGGALGTVAVIVRQEIVLFIMGGIFVAETLSVMLQVTWFKYTKKRYGEGRRIFKMAPLHHHFELSGWKETQVVVRFWIITLMLCLFGLSTLKLR</sequence>
<organism>
    <name type="scientific">Burkholderia thailandensis (strain ATCC 700388 / DSM 13276 / CCUG 48851 / CIP 106301 / E264)</name>
    <dbReference type="NCBI Taxonomy" id="271848"/>
    <lineage>
        <taxon>Bacteria</taxon>
        <taxon>Pseudomonadati</taxon>
        <taxon>Pseudomonadota</taxon>
        <taxon>Betaproteobacteria</taxon>
        <taxon>Burkholderiales</taxon>
        <taxon>Burkholderiaceae</taxon>
        <taxon>Burkholderia</taxon>
        <taxon>pseudomallei group</taxon>
    </lineage>
</organism>
<dbReference type="EC" id="2.7.8.13" evidence="1"/>
<dbReference type="EMBL" id="CP000086">
    <property type="protein sequence ID" value="ABC36934.1"/>
    <property type="molecule type" value="Genomic_DNA"/>
</dbReference>
<dbReference type="RefSeq" id="WP_004194370.1">
    <property type="nucleotide sequence ID" value="NZ_CP008785.1"/>
</dbReference>
<dbReference type="SMR" id="Q2SZI6"/>
<dbReference type="GeneID" id="92980246"/>
<dbReference type="KEGG" id="bte:BTH_I1115"/>
<dbReference type="HOGENOM" id="CLU_023982_0_0_4"/>
<dbReference type="UniPathway" id="UPA00219"/>
<dbReference type="Proteomes" id="UP000001930">
    <property type="component" value="Chromosome I"/>
</dbReference>
<dbReference type="GO" id="GO:0005886">
    <property type="term" value="C:plasma membrane"/>
    <property type="evidence" value="ECO:0007669"/>
    <property type="project" value="UniProtKB-SubCell"/>
</dbReference>
<dbReference type="GO" id="GO:0046872">
    <property type="term" value="F:metal ion binding"/>
    <property type="evidence" value="ECO:0007669"/>
    <property type="project" value="UniProtKB-KW"/>
</dbReference>
<dbReference type="GO" id="GO:0008963">
    <property type="term" value="F:phospho-N-acetylmuramoyl-pentapeptide-transferase activity"/>
    <property type="evidence" value="ECO:0007669"/>
    <property type="project" value="UniProtKB-UniRule"/>
</dbReference>
<dbReference type="GO" id="GO:0051992">
    <property type="term" value="F:UDP-N-acetylmuramoyl-L-alanyl-D-glutamyl-meso-2,6-diaminopimelyl-D-alanyl-D-alanine:undecaprenyl-phosphate transferase activity"/>
    <property type="evidence" value="ECO:0007669"/>
    <property type="project" value="RHEA"/>
</dbReference>
<dbReference type="GO" id="GO:0051301">
    <property type="term" value="P:cell division"/>
    <property type="evidence" value="ECO:0007669"/>
    <property type="project" value="UniProtKB-KW"/>
</dbReference>
<dbReference type="GO" id="GO:0071555">
    <property type="term" value="P:cell wall organization"/>
    <property type="evidence" value="ECO:0007669"/>
    <property type="project" value="UniProtKB-KW"/>
</dbReference>
<dbReference type="GO" id="GO:0009252">
    <property type="term" value="P:peptidoglycan biosynthetic process"/>
    <property type="evidence" value="ECO:0007669"/>
    <property type="project" value="UniProtKB-UniRule"/>
</dbReference>
<dbReference type="GO" id="GO:0008360">
    <property type="term" value="P:regulation of cell shape"/>
    <property type="evidence" value="ECO:0007669"/>
    <property type="project" value="UniProtKB-KW"/>
</dbReference>
<dbReference type="CDD" id="cd06852">
    <property type="entry name" value="GT_MraY"/>
    <property type="match status" value="1"/>
</dbReference>
<dbReference type="HAMAP" id="MF_00038">
    <property type="entry name" value="MraY"/>
    <property type="match status" value="1"/>
</dbReference>
<dbReference type="InterPro" id="IPR000715">
    <property type="entry name" value="Glycosyl_transferase_4"/>
</dbReference>
<dbReference type="InterPro" id="IPR003524">
    <property type="entry name" value="PNAcMuramoyl-5peptid_Trfase"/>
</dbReference>
<dbReference type="InterPro" id="IPR018480">
    <property type="entry name" value="PNAcMuramoyl-5peptid_Trfase_CS"/>
</dbReference>
<dbReference type="NCBIfam" id="TIGR00445">
    <property type="entry name" value="mraY"/>
    <property type="match status" value="1"/>
</dbReference>
<dbReference type="PANTHER" id="PTHR22926">
    <property type="entry name" value="PHOSPHO-N-ACETYLMURAMOYL-PENTAPEPTIDE-TRANSFERASE"/>
    <property type="match status" value="1"/>
</dbReference>
<dbReference type="PANTHER" id="PTHR22926:SF5">
    <property type="entry name" value="PHOSPHO-N-ACETYLMURAMOYL-PENTAPEPTIDE-TRANSFERASE HOMOLOG"/>
    <property type="match status" value="1"/>
</dbReference>
<dbReference type="Pfam" id="PF00953">
    <property type="entry name" value="Glycos_transf_4"/>
    <property type="match status" value="1"/>
</dbReference>
<dbReference type="Pfam" id="PF10555">
    <property type="entry name" value="MraY_sig1"/>
    <property type="match status" value="1"/>
</dbReference>
<dbReference type="PROSITE" id="PS01347">
    <property type="entry name" value="MRAY_1"/>
    <property type="match status" value="1"/>
</dbReference>
<dbReference type="PROSITE" id="PS01348">
    <property type="entry name" value="MRAY_2"/>
    <property type="match status" value="1"/>
</dbReference>
<keyword id="KW-0131">Cell cycle</keyword>
<keyword id="KW-0132">Cell division</keyword>
<keyword id="KW-0997">Cell inner membrane</keyword>
<keyword id="KW-1003">Cell membrane</keyword>
<keyword id="KW-0133">Cell shape</keyword>
<keyword id="KW-0961">Cell wall biogenesis/degradation</keyword>
<keyword id="KW-0460">Magnesium</keyword>
<keyword id="KW-0472">Membrane</keyword>
<keyword id="KW-0479">Metal-binding</keyword>
<keyword id="KW-0573">Peptidoglycan synthesis</keyword>
<keyword id="KW-0808">Transferase</keyword>
<keyword id="KW-0812">Transmembrane</keyword>
<keyword id="KW-1133">Transmembrane helix</keyword>
<proteinExistence type="inferred from homology"/>
<evidence type="ECO:0000255" key="1">
    <source>
        <dbReference type="HAMAP-Rule" id="MF_00038"/>
    </source>
</evidence>
<reference key="1">
    <citation type="journal article" date="2005" name="BMC Genomics">
        <title>Bacterial genome adaptation to niches: divergence of the potential virulence genes in three Burkholderia species of different survival strategies.</title>
        <authorList>
            <person name="Kim H.S."/>
            <person name="Schell M.A."/>
            <person name="Yu Y."/>
            <person name="Ulrich R.L."/>
            <person name="Sarria S.H."/>
            <person name="Nierman W.C."/>
            <person name="DeShazer D."/>
        </authorList>
    </citation>
    <scope>NUCLEOTIDE SEQUENCE [LARGE SCALE GENOMIC DNA]</scope>
    <source>
        <strain>ATCC 700388 / DSM 13276 / CCUG 48851 / CIP 106301 / E264</strain>
    </source>
</reference>
<accession>Q2SZI6</accession>
<protein>
    <recommendedName>
        <fullName evidence="1">Phospho-N-acetylmuramoyl-pentapeptide-transferase</fullName>
        <ecNumber evidence="1">2.7.8.13</ecNumber>
    </recommendedName>
    <alternativeName>
        <fullName evidence="1">UDP-MurNAc-pentapeptide phosphotransferase</fullName>
    </alternativeName>
</protein>
<name>MRAY_BURTA</name>
<gene>
    <name evidence="1" type="primary">mraY</name>
    <name type="ordered locus">BTH_I1115</name>
</gene>